<sequence length="970" mass="105431">MSKVSGANETLQGALAPLSHMGGGGDATLLKDEGQVELPRGPGVLNVQVLPEEGHAHLQDLEGYKSMDPRQSESASTDVSEMLQHTASLDDPIQFTRVSTSSVTSNSSSDPRESGDTQETGSRRGCSTEEQAPAGAERVSGQDQDSWDVEEVVAEPRSGIDVTPVGDVTNSTIRASGRSAESTSHYLDEYSDTRYSSSSPSSGSRKLSTTIITPEKNVVAQALHCYADNYESPLNDLMSSGDERSSSVRETSFENASSDTNANLNGGRASTGESMRSPPPATGLPNGFVHTQASAPALPVLPAKSPFRAVQSPFSGTRKSRNSANLAELSLPRTSTSSASSMEQRKSRGGRMKVVLSSFVQNIRRNSQGEKRRSGTAMKISTPYNATHVHHVGVDSRTGEYTGLPEEWERLLASSGISKKEQQQHPQAVMDIVKFYQDVTGTSGEDKVFKTFNVSSTNACELSSSPSFKTPSLSSITRFEGSHEAYNSAYHSPMLQSPMGFHDPQHDEKFIPSRPAPRPPGGAAPKTDFTSPLAYDSQSATATPKNQRFSNQSSGFFSLARKATLNKNKQQLPPIPSAAAASAPITQPGSTANIPYIKPAENPVSAPSKSIPPSLPAVPTPPPPIEKDPPLRDLEREREREHSSAKQGQLALERKREEKRRRNQKLQAKLAEICSPGDPSKIYRNLVKIGQGASGGVYTAYEIGTNASVAIKQMNLEKQPKKELIINEILVMKGSRHNNIVNFIDSYLLKGDLWVIMEYMEGGSLTDVVTHCILTEGQIAAVSRETLRGLHFLHSKGVIHRDIKSDNILLSMDGNIKLTDFGFCAQINETNLKRTTMVGTPYWMAPEVVSRKEYGPKVDIWSLGIMIIEMIEGEPPYLNETPLRALYLIATNGTPKLKDADSLSPVLKRFLSWCLQVSPNDRATAMELLYDKFIVEVAEANASLAPLVKLARMKKLAEKMDADSDDNRTD</sequence>
<accession>Q75DK7</accession>
<reference key="1">
    <citation type="journal article" date="2004" name="Science">
        <title>The Ashbya gossypii genome as a tool for mapping the ancient Saccharomyces cerevisiae genome.</title>
        <authorList>
            <person name="Dietrich F.S."/>
            <person name="Voegeli S."/>
            <person name="Brachat S."/>
            <person name="Lerch A."/>
            <person name="Gates K."/>
            <person name="Steiner S."/>
            <person name="Mohr C."/>
            <person name="Poehlmann R."/>
            <person name="Luedi P."/>
            <person name="Choi S."/>
            <person name="Wing R.A."/>
            <person name="Flavier A."/>
            <person name="Gaffney T.D."/>
            <person name="Philippsen P."/>
        </authorList>
    </citation>
    <scope>NUCLEOTIDE SEQUENCE [LARGE SCALE GENOMIC DNA]</scope>
    <source>
        <strain>ATCC 10895 / CBS 109.51 / FGSC 9923 / NRRL Y-1056</strain>
    </source>
</reference>
<reference key="2">
    <citation type="journal article" date="2013" name="G3 (Bethesda)">
        <title>Genomes of Ashbya fungi isolated from insects reveal four mating-type loci, numerous translocations, lack of transposons, and distinct gene duplications.</title>
        <authorList>
            <person name="Dietrich F.S."/>
            <person name="Voegeli S."/>
            <person name="Kuo S."/>
            <person name="Philippsen P."/>
        </authorList>
    </citation>
    <scope>GENOME REANNOTATION</scope>
    <scope>SEQUENCE REVISION TO 200; 212; 230; 282; 907; 914 AND 917-931</scope>
    <source>
        <strain>ATCC 10895 / CBS 109.51 / FGSC 9923 / NRRL Y-1056</strain>
    </source>
</reference>
<name>STE20_EREGS</name>
<gene>
    <name type="primary">STE20</name>
    <name type="ordered locus">ABR014W</name>
</gene>
<evidence type="ECO:0000250" key="1"/>
<evidence type="ECO:0000255" key="2">
    <source>
        <dbReference type="PROSITE-ProRule" id="PRU00057"/>
    </source>
</evidence>
<evidence type="ECO:0000255" key="3">
    <source>
        <dbReference type="PROSITE-ProRule" id="PRU00159"/>
    </source>
</evidence>
<evidence type="ECO:0000255" key="4">
    <source>
        <dbReference type="PROSITE-ProRule" id="PRU10027"/>
    </source>
</evidence>
<evidence type="ECO:0000256" key="5">
    <source>
        <dbReference type="SAM" id="MobiDB-lite"/>
    </source>
</evidence>
<evidence type="ECO:0000305" key="6"/>
<protein>
    <recommendedName>
        <fullName>Serine/threonine-protein kinase STE20</fullName>
        <ecNumber>2.7.11.1</ecNumber>
    </recommendedName>
</protein>
<feature type="chain" id="PRO_0000237625" description="Serine/threonine-protein kinase STE20">
    <location>
        <begin position="1"/>
        <end position="970"/>
    </location>
</feature>
<feature type="domain" description="CRIB" evidence="2">
    <location>
        <begin position="380"/>
        <end position="393"/>
    </location>
</feature>
<feature type="domain" description="Protein kinase" evidence="3">
    <location>
        <begin position="683"/>
        <end position="934"/>
    </location>
</feature>
<feature type="region of interest" description="Disordered" evidence="5">
    <location>
        <begin position="1"/>
        <end position="42"/>
    </location>
</feature>
<feature type="region of interest" description="Disordered" evidence="5">
    <location>
        <begin position="86"/>
        <end position="185"/>
    </location>
</feature>
<feature type="region of interest" description="Disordered" evidence="5">
    <location>
        <begin position="236"/>
        <end position="284"/>
    </location>
</feature>
<feature type="region of interest" description="Disordered" evidence="5">
    <location>
        <begin position="311"/>
        <end position="351"/>
    </location>
</feature>
<feature type="region of interest" description="Disordered" evidence="5">
    <location>
        <begin position="499"/>
        <end position="551"/>
    </location>
</feature>
<feature type="region of interest" description="Disordered" evidence="5">
    <location>
        <begin position="592"/>
        <end position="663"/>
    </location>
</feature>
<feature type="compositionally biased region" description="Polar residues" evidence="5">
    <location>
        <begin position="1"/>
        <end position="11"/>
    </location>
</feature>
<feature type="compositionally biased region" description="Low complexity" evidence="5">
    <location>
        <begin position="98"/>
        <end position="109"/>
    </location>
</feature>
<feature type="compositionally biased region" description="Polar residues" evidence="5">
    <location>
        <begin position="168"/>
        <end position="185"/>
    </location>
</feature>
<feature type="compositionally biased region" description="Polar residues" evidence="5">
    <location>
        <begin position="248"/>
        <end position="264"/>
    </location>
</feature>
<feature type="compositionally biased region" description="Polar residues" evidence="5">
    <location>
        <begin position="312"/>
        <end position="325"/>
    </location>
</feature>
<feature type="compositionally biased region" description="Polar residues" evidence="5">
    <location>
        <begin position="536"/>
        <end position="551"/>
    </location>
</feature>
<feature type="compositionally biased region" description="Pro residues" evidence="5">
    <location>
        <begin position="613"/>
        <end position="624"/>
    </location>
</feature>
<feature type="compositionally biased region" description="Basic and acidic residues" evidence="5">
    <location>
        <begin position="625"/>
        <end position="644"/>
    </location>
</feature>
<feature type="active site" description="Proton acceptor" evidence="3 4">
    <location>
        <position position="802"/>
    </location>
</feature>
<feature type="binding site" evidence="3">
    <location>
        <begin position="689"/>
        <end position="697"/>
    </location>
    <ligand>
        <name>ATP</name>
        <dbReference type="ChEBI" id="CHEBI:30616"/>
    </ligand>
</feature>
<feature type="binding site" evidence="3">
    <location>
        <position position="712"/>
    </location>
    <ligand>
        <name>ATP</name>
        <dbReference type="ChEBI" id="CHEBI:30616"/>
    </ligand>
</feature>
<organism>
    <name type="scientific">Eremothecium gossypii (strain ATCC 10895 / CBS 109.51 / FGSC 9923 / NRRL Y-1056)</name>
    <name type="common">Yeast</name>
    <name type="synonym">Ashbya gossypii</name>
    <dbReference type="NCBI Taxonomy" id="284811"/>
    <lineage>
        <taxon>Eukaryota</taxon>
        <taxon>Fungi</taxon>
        <taxon>Dikarya</taxon>
        <taxon>Ascomycota</taxon>
        <taxon>Saccharomycotina</taxon>
        <taxon>Saccharomycetes</taxon>
        <taxon>Saccharomycetales</taxon>
        <taxon>Saccharomycetaceae</taxon>
        <taxon>Eremothecium</taxon>
    </lineage>
</organism>
<keyword id="KW-0067">ATP-binding</keyword>
<keyword id="KW-0963">Cytoplasm</keyword>
<keyword id="KW-0418">Kinase</keyword>
<keyword id="KW-0547">Nucleotide-binding</keyword>
<keyword id="KW-0539">Nucleus</keyword>
<keyword id="KW-0589">Pheromone response</keyword>
<keyword id="KW-1185">Reference proteome</keyword>
<keyword id="KW-0723">Serine/threonine-protein kinase</keyword>
<keyword id="KW-0808">Transferase</keyword>
<proteinExistence type="inferred from homology"/>
<dbReference type="EC" id="2.7.11.1"/>
<dbReference type="EMBL" id="AE016815">
    <property type="protein sequence ID" value="AAS50784.2"/>
    <property type="molecule type" value="Genomic_DNA"/>
</dbReference>
<dbReference type="RefSeq" id="NP_982960.2">
    <property type="nucleotide sequence ID" value="NM_208313.2"/>
</dbReference>
<dbReference type="SMR" id="Q75DK7"/>
<dbReference type="FunCoup" id="Q75DK7">
    <property type="interactions" value="468"/>
</dbReference>
<dbReference type="STRING" id="284811.Q75DK7"/>
<dbReference type="EnsemblFungi" id="AAS50784">
    <property type="protein sequence ID" value="AAS50784"/>
    <property type="gene ID" value="AGOS_ABR014W"/>
</dbReference>
<dbReference type="GeneID" id="4619052"/>
<dbReference type="KEGG" id="ago:AGOS_ABR014W"/>
<dbReference type="eggNOG" id="KOG0578">
    <property type="taxonomic scope" value="Eukaryota"/>
</dbReference>
<dbReference type="HOGENOM" id="CLU_000288_26_3_1"/>
<dbReference type="InParanoid" id="Q75DK7"/>
<dbReference type="OMA" id="YNAKHVH"/>
<dbReference type="OrthoDB" id="248923at2759"/>
<dbReference type="Proteomes" id="UP000000591">
    <property type="component" value="Chromosome II"/>
</dbReference>
<dbReference type="GO" id="GO:0005737">
    <property type="term" value="C:cytoplasm"/>
    <property type="evidence" value="ECO:0000318"/>
    <property type="project" value="GO_Central"/>
</dbReference>
<dbReference type="GO" id="GO:0000131">
    <property type="term" value="C:incipient cellular bud site"/>
    <property type="evidence" value="ECO:0007669"/>
    <property type="project" value="EnsemblFungi"/>
</dbReference>
<dbReference type="GO" id="GO:0043332">
    <property type="term" value="C:mating projection tip"/>
    <property type="evidence" value="ECO:0007669"/>
    <property type="project" value="EnsemblFungi"/>
</dbReference>
<dbReference type="GO" id="GO:0005634">
    <property type="term" value="C:nucleus"/>
    <property type="evidence" value="ECO:0007669"/>
    <property type="project" value="UniProtKB-SubCell"/>
</dbReference>
<dbReference type="GO" id="GO:0005524">
    <property type="term" value="F:ATP binding"/>
    <property type="evidence" value="ECO:0007669"/>
    <property type="project" value="UniProtKB-KW"/>
</dbReference>
<dbReference type="GO" id="GO:0044025">
    <property type="term" value="F:histone H2BS14 kinase activity"/>
    <property type="evidence" value="ECO:0007669"/>
    <property type="project" value="EnsemblFungi"/>
</dbReference>
<dbReference type="GO" id="GO:0008349">
    <property type="term" value="F:MAP kinase kinase kinase kinase activity"/>
    <property type="evidence" value="ECO:0007669"/>
    <property type="project" value="EnsemblFungi"/>
</dbReference>
<dbReference type="GO" id="GO:0106310">
    <property type="term" value="F:protein serine kinase activity"/>
    <property type="evidence" value="ECO:0007669"/>
    <property type="project" value="RHEA"/>
</dbReference>
<dbReference type="GO" id="GO:0004674">
    <property type="term" value="F:protein serine/threonine kinase activity"/>
    <property type="evidence" value="ECO:0000318"/>
    <property type="project" value="GO_Central"/>
</dbReference>
<dbReference type="GO" id="GO:0007121">
    <property type="term" value="P:bipolar cellular bud site selection"/>
    <property type="evidence" value="ECO:0007669"/>
    <property type="project" value="EnsemblFungi"/>
</dbReference>
<dbReference type="GO" id="GO:0007118">
    <property type="term" value="P:budding cell apical bud growth"/>
    <property type="evidence" value="ECO:0007669"/>
    <property type="project" value="EnsemblFungi"/>
</dbReference>
<dbReference type="GO" id="GO:0070301">
    <property type="term" value="P:cellular response to hydrogen peroxide"/>
    <property type="evidence" value="ECO:0007669"/>
    <property type="project" value="EnsemblFungi"/>
</dbReference>
<dbReference type="GO" id="GO:0009267">
    <property type="term" value="P:cellular response to starvation"/>
    <property type="evidence" value="ECO:0000318"/>
    <property type="project" value="GO_Central"/>
</dbReference>
<dbReference type="GO" id="GO:0035556">
    <property type="term" value="P:intracellular signal transduction"/>
    <property type="evidence" value="ECO:0000318"/>
    <property type="project" value="GO_Central"/>
</dbReference>
<dbReference type="GO" id="GO:0001403">
    <property type="term" value="P:invasive growth in response to glucose limitation"/>
    <property type="evidence" value="ECO:0007669"/>
    <property type="project" value="EnsemblFungi"/>
</dbReference>
<dbReference type="GO" id="GO:0010629">
    <property type="term" value="P:negative regulation of gene expression"/>
    <property type="evidence" value="ECO:0007669"/>
    <property type="project" value="EnsemblFungi"/>
</dbReference>
<dbReference type="GO" id="GO:2000910">
    <property type="term" value="P:negative regulation of sterol import"/>
    <property type="evidence" value="ECO:0007669"/>
    <property type="project" value="EnsemblFungi"/>
</dbReference>
<dbReference type="GO" id="GO:0000122">
    <property type="term" value="P:negative regulation of transcription by RNA polymerase II"/>
    <property type="evidence" value="ECO:0007669"/>
    <property type="project" value="EnsemblFungi"/>
</dbReference>
<dbReference type="GO" id="GO:0007232">
    <property type="term" value="P:osmosensory signaling pathway via Sho1 osmosensor"/>
    <property type="evidence" value="ECO:0007669"/>
    <property type="project" value="EnsemblFungi"/>
</dbReference>
<dbReference type="GO" id="GO:0000750">
    <property type="term" value="P:pheromone-dependent signal transduction involved in conjugation with cellular fusion"/>
    <property type="evidence" value="ECO:0007669"/>
    <property type="project" value="EnsemblFungi"/>
</dbReference>
<dbReference type="GO" id="GO:0043065">
    <property type="term" value="P:positive regulation of apoptotic process"/>
    <property type="evidence" value="ECO:0007669"/>
    <property type="project" value="EnsemblFungi"/>
</dbReference>
<dbReference type="GO" id="GO:0007124">
    <property type="term" value="P:pseudohyphal growth"/>
    <property type="evidence" value="ECO:0007669"/>
    <property type="project" value="EnsemblFungi"/>
</dbReference>
<dbReference type="GO" id="GO:0007096">
    <property type="term" value="P:regulation of exit from mitosis"/>
    <property type="evidence" value="ECO:0007669"/>
    <property type="project" value="EnsemblFungi"/>
</dbReference>
<dbReference type="GO" id="GO:0043408">
    <property type="term" value="P:regulation of MAPK cascade"/>
    <property type="evidence" value="ECO:0000318"/>
    <property type="project" value="GO_Central"/>
</dbReference>
<dbReference type="GO" id="GO:0001402">
    <property type="term" value="P:signal transduction involved in filamentous growth"/>
    <property type="evidence" value="ECO:0007669"/>
    <property type="project" value="EnsemblFungi"/>
</dbReference>
<dbReference type="GO" id="GO:0035376">
    <property type="term" value="P:sterol import"/>
    <property type="evidence" value="ECO:0007669"/>
    <property type="project" value="EnsemblFungi"/>
</dbReference>
<dbReference type="GO" id="GO:0034063">
    <property type="term" value="P:stress granule assembly"/>
    <property type="evidence" value="ECO:0007669"/>
    <property type="project" value="EnsemblFungi"/>
</dbReference>
<dbReference type="GO" id="GO:0000011">
    <property type="term" value="P:vacuole inheritance"/>
    <property type="evidence" value="ECO:0007669"/>
    <property type="project" value="EnsemblFungi"/>
</dbReference>
<dbReference type="CDD" id="cd01093">
    <property type="entry name" value="CRIB_PAK_like"/>
    <property type="match status" value="1"/>
</dbReference>
<dbReference type="CDD" id="cd06614">
    <property type="entry name" value="STKc_PAK"/>
    <property type="match status" value="1"/>
</dbReference>
<dbReference type="FunFam" id="1.10.510.10:FF:000011">
    <property type="entry name" value="Non-specific serine/threonine protein kinase"/>
    <property type="match status" value="1"/>
</dbReference>
<dbReference type="FunFam" id="3.30.200.20:FF:000385">
    <property type="entry name" value="Non-specific serine/threonine protein kinase"/>
    <property type="match status" value="1"/>
</dbReference>
<dbReference type="FunFam" id="3.90.810.10:FF:000007">
    <property type="entry name" value="Non-specific serine/threonine protein kinase"/>
    <property type="match status" value="1"/>
</dbReference>
<dbReference type="Gene3D" id="3.90.810.10">
    <property type="entry name" value="CRIB domain"/>
    <property type="match status" value="1"/>
</dbReference>
<dbReference type="Gene3D" id="3.30.200.20">
    <property type="entry name" value="Phosphorylase Kinase, domain 1"/>
    <property type="match status" value="1"/>
</dbReference>
<dbReference type="Gene3D" id="1.10.510.10">
    <property type="entry name" value="Transferase(Phosphotransferase) domain 1"/>
    <property type="match status" value="1"/>
</dbReference>
<dbReference type="InterPro" id="IPR000095">
    <property type="entry name" value="CRIB_dom"/>
</dbReference>
<dbReference type="InterPro" id="IPR036936">
    <property type="entry name" value="CRIB_dom_sf"/>
</dbReference>
<dbReference type="InterPro" id="IPR011009">
    <property type="entry name" value="Kinase-like_dom_sf"/>
</dbReference>
<dbReference type="InterPro" id="IPR051931">
    <property type="entry name" value="PAK3-like"/>
</dbReference>
<dbReference type="InterPro" id="IPR033923">
    <property type="entry name" value="PAK_BD"/>
</dbReference>
<dbReference type="InterPro" id="IPR000719">
    <property type="entry name" value="Prot_kinase_dom"/>
</dbReference>
<dbReference type="InterPro" id="IPR017441">
    <property type="entry name" value="Protein_kinase_ATP_BS"/>
</dbReference>
<dbReference type="InterPro" id="IPR008271">
    <property type="entry name" value="Ser/Thr_kinase_AS"/>
</dbReference>
<dbReference type="PANTHER" id="PTHR45832">
    <property type="entry name" value="SERINE/THREONINE-PROTEIN KINASE SAMKA-RELATED-RELATED"/>
    <property type="match status" value="1"/>
</dbReference>
<dbReference type="PANTHER" id="PTHR45832:SF22">
    <property type="entry name" value="SERINE_THREONINE-PROTEIN KINASE SAMKA-RELATED"/>
    <property type="match status" value="1"/>
</dbReference>
<dbReference type="Pfam" id="PF00786">
    <property type="entry name" value="PBD"/>
    <property type="match status" value="1"/>
</dbReference>
<dbReference type="Pfam" id="PF00069">
    <property type="entry name" value="Pkinase"/>
    <property type="match status" value="1"/>
</dbReference>
<dbReference type="SMART" id="SM00285">
    <property type="entry name" value="PBD"/>
    <property type="match status" value="1"/>
</dbReference>
<dbReference type="SMART" id="SM00220">
    <property type="entry name" value="S_TKc"/>
    <property type="match status" value="1"/>
</dbReference>
<dbReference type="SUPFAM" id="SSF56112">
    <property type="entry name" value="Protein kinase-like (PK-like)"/>
    <property type="match status" value="1"/>
</dbReference>
<dbReference type="PROSITE" id="PS50108">
    <property type="entry name" value="CRIB"/>
    <property type="match status" value="1"/>
</dbReference>
<dbReference type="PROSITE" id="PS00107">
    <property type="entry name" value="PROTEIN_KINASE_ATP"/>
    <property type="match status" value="1"/>
</dbReference>
<dbReference type="PROSITE" id="PS50011">
    <property type="entry name" value="PROTEIN_KINASE_DOM"/>
    <property type="match status" value="1"/>
</dbReference>
<dbReference type="PROSITE" id="PS00108">
    <property type="entry name" value="PROTEIN_KINASE_ST"/>
    <property type="match status" value="1"/>
</dbReference>
<comment type="function">
    <text evidence="1">MAP4K component of the MAPK pathway required for the mating pheromone response and the regulation of cell polarity and cell cycle. Phosphorylates histone H2B to form H2BS10ph (By similarity).</text>
</comment>
<comment type="catalytic activity">
    <reaction>
        <text>L-seryl-[protein] + ATP = O-phospho-L-seryl-[protein] + ADP + H(+)</text>
        <dbReference type="Rhea" id="RHEA:17989"/>
        <dbReference type="Rhea" id="RHEA-COMP:9863"/>
        <dbReference type="Rhea" id="RHEA-COMP:11604"/>
        <dbReference type="ChEBI" id="CHEBI:15378"/>
        <dbReference type="ChEBI" id="CHEBI:29999"/>
        <dbReference type="ChEBI" id="CHEBI:30616"/>
        <dbReference type="ChEBI" id="CHEBI:83421"/>
        <dbReference type="ChEBI" id="CHEBI:456216"/>
        <dbReference type="EC" id="2.7.11.1"/>
    </reaction>
</comment>
<comment type="catalytic activity">
    <reaction>
        <text>L-threonyl-[protein] + ATP = O-phospho-L-threonyl-[protein] + ADP + H(+)</text>
        <dbReference type="Rhea" id="RHEA:46608"/>
        <dbReference type="Rhea" id="RHEA-COMP:11060"/>
        <dbReference type="Rhea" id="RHEA-COMP:11605"/>
        <dbReference type="ChEBI" id="CHEBI:15378"/>
        <dbReference type="ChEBI" id="CHEBI:30013"/>
        <dbReference type="ChEBI" id="CHEBI:30616"/>
        <dbReference type="ChEBI" id="CHEBI:61977"/>
        <dbReference type="ChEBI" id="CHEBI:456216"/>
        <dbReference type="EC" id="2.7.11.1"/>
    </reaction>
</comment>
<comment type="subcellular location">
    <subcellularLocation>
        <location evidence="1">Cytoplasm</location>
    </subcellularLocation>
    <subcellularLocation>
        <location evidence="1">Nucleus</location>
    </subcellularLocation>
</comment>
<comment type="similarity">
    <text evidence="6">Belongs to the protein kinase superfamily. STE Ser/Thr protein kinase family. STE20 subfamily.</text>
</comment>